<accession>P81907</accession>
<reference key="1">
    <citation type="journal article" date="2000" name="Eur. J. Biochem.">
        <title>Isolation and characterization of novel inducible serine protease inhibitors from larval hemolymph of the greater wax moth Galleria mellonella.</title>
        <authorList>
            <person name="Froebius A.C."/>
            <person name="Kanost M.R."/>
            <person name="Goetz P."/>
            <person name="Vilcinskas A."/>
        </authorList>
    </citation>
    <scope>PROTEIN SEQUENCE</scope>
    <source>
        <tissue>Hemolymph</tissue>
    </source>
</reference>
<keyword id="KW-0903">Direct protein sequencing</keyword>
<keyword id="KW-0646">Protease inhibitor</keyword>
<keyword id="KW-1185">Reference proteome</keyword>
<keyword id="KW-0722">Serine protease inhibitor</keyword>
<protein>
    <recommendedName>
        <fullName>Inducible serine protease inhibitor 3</fullName>
        <shortName>ISPI-3</shortName>
    </recommendedName>
</protein>
<sequence>NKTNLKQLKAEAARKKAXMQDMXTSVKVEPLXAXXNGAXRM</sequence>
<name>ISP3_GALME</name>
<proteinExistence type="evidence at protein level"/>
<organism>
    <name type="scientific">Galleria mellonella</name>
    <name type="common">Greater wax moth</name>
    <dbReference type="NCBI Taxonomy" id="7137"/>
    <lineage>
        <taxon>Eukaryota</taxon>
        <taxon>Metazoa</taxon>
        <taxon>Ecdysozoa</taxon>
        <taxon>Arthropoda</taxon>
        <taxon>Hexapoda</taxon>
        <taxon>Insecta</taxon>
        <taxon>Pterygota</taxon>
        <taxon>Neoptera</taxon>
        <taxon>Endopterygota</taxon>
        <taxon>Lepidoptera</taxon>
        <taxon>Glossata</taxon>
        <taxon>Ditrysia</taxon>
        <taxon>Pyraloidea</taxon>
        <taxon>Pyralidae</taxon>
        <taxon>Galleriinae</taxon>
        <taxon>Galleria</taxon>
    </lineage>
</organism>
<feature type="chain" id="PRO_0000084259" description="Inducible serine protease inhibitor 3">
    <location>
        <begin position="1"/>
        <end position="41" status="greater than"/>
    </location>
</feature>
<feature type="non-terminal residue">
    <location>
        <position position="41"/>
    </location>
</feature>
<dbReference type="InParanoid" id="P81907"/>
<dbReference type="Proteomes" id="UP000504614">
    <property type="component" value="Unplaced"/>
</dbReference>
<dbReference type="GO" id="GO:0004867">
    <property type="term" value="F:serine-type endopeptidase inhibitor activity"/>
    <property type="evidence" value="ECO:0007669"/>
    <property type="project" value="UniProtKB-KW"/>
</dbReference>
<comment type="function">
    <text>Inhibits trypsin and the toxin proteases PR1 and PR2 of M.anisopliae. Does not inhibit chymotrypsin, subtilisin Carlsberg, proteinase K and porcine pancreatic elastase.</text>
</comment>
<comment type="developmental stage">
    <text>Last instar larvae.</text>
</comment>
<comment type="induction">
    <text>By infection.</text>
</comment>